<comment type="function">
    <text evidence="1">Catalyzes the formation of N(7)-methylguanine at position 46 (m7G46) in tRNA.</text>
</comment>
<comment type="catalytic activity">
    <reaction evidence="1">
        <text>guanosine(46) in tRNA + S-adenosyl-L-methionine = N(7)-methylguanosine(46) in tRNA + S-adenosyl-L-homocysteine</text>
        <dbReference type="Rhea" id="RHEA:42708"/>
        <dbReference type="Rhea" id="RHEA-COMP:10188"/>
        <dbReference type="Rhea" id="RHEA-COMP:10189"/>
        <dbReference type="ChEBI" id="CHEBI:57856"/>
        <dbReference type="ChEBI" id="CHEBI:59789"/>
        <dbReference type="ChEBI" id="CHEBI:74269"/>
        <dbReference type="ChEBI" id="CHEBI:74480"/>
        <dbReference type="EC" id="2.1.1.33"/>
    </reaction>
</comment>
<comment type="pathway">
    <text evidence="1">tRNA modification; N(7)-methylguanine-tRNA biosynthesis.</text>
</comment>
<comment type="subunit">
    <text evidence="1">Forms a complex with TRM82.</text>
</comment>
<comment type="subcellular location">
    <subcellularLocation>
        <location evidence="1">Nucleus</location>
    </subcellularLocation>
</comment>
<comment type="similarity">
    <text evidence="1">Belongs to the class I-like SAM-binding methyltransferase superfamily. TrmB family.</text>
</comment>
<gene>
    <name evidence="1" type="primary">TRM8</name>
    <name type="ordered locus">KLLA0A03245g</name>
</gene>
<organism>
    <name type="scientific">Kluyveromyces lactis (strain ATCC 8585 / CBS 2359 / DSM 70799 / NBRC 1267 / NRRL Y-1140 / WM37)</name>
    <name type="common">Yeast</name>
    <name type="synonym">Candida sphaerica</name>
    <dbReference type="NCBI Taxonomy" id="284590"/>
    <lineage>
        <taxon>Eukaryota</taxon>
        <taxon>Fungi</taxon>
        <taxon>Dikarya</taxon>
        <taxon>Ascomycota</taxon>
        <taxon>Saccharomycotina</taxon>
        <taxon>Saccharomycetes</taxon>
        <taxon>Saccharomycetales</taxon>
        <taxon>Saccharomycetaceae</taxon>
        <taxon>Kluyveromyces</taxon>
    </lineage>
</organism>
<evidence type="ECO:0000255" key="1">
    <source>
        <dbReference type="HAMAP-Rule" id="MF_03055"/>
    </source>
</evidence>
<proteinExistence type="inferred from homology"/>
<feature type="chain" id="PRO_0000370597" description="tRNA (guanine-N(7)-)-methyltransferase">
    <location>
        <begin position="1"/>
        <end position="278"/>
    </location>
</feature>
<feature type="active site" evidence="1">
    <location>
        <position position="176"/>
    </location>
</feature>
<feature type="binding site" evidence="1">
    <location>
        <position position="95"/>
    </location>
    <ligand>
        <name>S-adenosyl-L-methionine</name>
        <dbReference type="ChEBI" id="CHEBI:59789"/>
    </ligand>
</feature>
<feature type="binding site" evidence="1">
    <location>
        <begin position="118"/>
        <end position="119"/>
    </location>
    <ligand>
        <name>S-adenosyl-L-methionine</name>
        <dbReference type="ChEBI" id="CHEBI:59789"/>
    </ligand>
</feature>
<feature type="binding site" evidence="1">
    <location>
        <begin position="153"/>
        <end position="154"/>
    </location>
    <ligand>
        <name>S-adenosyl-L-methionine</name>
        <dbReference type="ChEBI" id="CHEBI:59789"/>
    </ligand>
</feature>
<feature type="binding site" evidence="1">
    <location>
        <position position="173"/>
    </location>
    <ligand>
        <name>S-adenosyl-L-methionine</name>
        <dbReference type="ChEBI" id="CHEBI:59789"/>
    </ligand>
</feature>
<feature type="binding site" evidence="1">
    <location>
        <begin position="251"/>
        <end position="253"/>
    </location>
    <ligand>
        <name>S-adenosyl-L-methionine</name>
        <dbReference type="ChEBI" id="CHEBI:59789"/>
    </ligand>
</feature>
<protein>
    <recommendedName>
        <fullName evidence="1">tRNA (guanine-N(7)-)-methyltransferase</fullName>
        <ecNumber evidence="1">2.1.1.33</ecNumber>
    </recommendedName>
    <alternativeName>
        <fullName evidence="1">Transfer RNA methyltransferase 8</fullName>
    </alternativeName>
    <alternativeName>
        <fullName evidence="1">tRNA (guanine(46)-N(7))-methyltransferase</fullName>
    </alternativeName>
    <alternativeName>
        <fullName evidence="1">tRNA(m7G46)-methyltransferase</fullName>
    </alternativeName>
</protein>
<reference key="1">
    <citation type="journal article" date="2004" name="Nature">
        <title>Genome evolution in yeasts.</title>
        <authorList>
            <person name="Dujon B."/>
            <person name="Sherman D."/>
            <person name="Fischer G."/>
            <person name="Durrens P."/>
            <person name="Casaregola S."/>
            <person name="Lafontaine I."/>
            <person name="de Montigny J."/>
            <person name="Marck C."/>
            <person name="Neuveglise C."/>
            <person name="Talla E."/>
            <person name="Goffard N."/>
            <person name="Frangeul L."/>
            <person name="Aigle M."/>
            <person name="Anthouard V."/>
            <person name="Babour A."/>
            <person name="Barbe V."/>
            <person name="Barnay S."/>
            <person name="Blanchin S."/>
            <person name="Beckerich J.-M."/>
            <person name="Beyne E."/>
            <person name="Bleykasten C."/>
            <person name="Boisrame A."/>
            <person name="Boyer J."/>
            <person name="Cattolico L."/>
            <person name="Confanioleri F."/>
            <person name="de Daruvar A."/>
            <person name="Despons L."/>
            <person name="Fabre E."/>
            <person name="Fairhead C."/>
            <person name="Ferry-Dumazet H."/>
            <person name="Groppi A."/>
            <person name="Hantraye F."/>
            <person name="Hennequin C."/>
            <person name="Jauniaux N."/>
            <person name="Joyet P."/>
            <person name="Kachouri R."/>
            <person name="Kerrest A."/>
            <person name="Koszul R."/>
            <person name="Lemaire M."/>
            <person name="Lesur I."/>
            <person name="Ma L."/>
            <person name="Muller H."/>
            <person name="Nicaud J.-M."/>
            <person name="Nikolski M."/>
            <person name="Oztas S."/>
            <person name="Ozier-Kalogeropoulos O."/>
            <person name="Pellenz S."/>
            <person name="Potier S."/>
            <person name="Richard G.-F."/>
            <person name="Straub M.-L."/>
            <person name="Suleau A."/>
            <person name="Swennen D."/>
            <person name="Tekaia F."/>
            <person name="Wesolowski-Louvel M."/>
            <person name="Westhof E."/>
            <person name="Wirth B."/>
            <person name="Zeniou-Meyer M."/>
            <person name="Zivanovic Y."/>
            <person name="Bolotin-Fukuhara M."/>
            <person name="Thierry A."/>
            <person name="Bouchier C."/>
            <person name="Caudron B."/>
            <person name="Scarpelli C."/>
            <person name="Gaillardin C."/>
            <person name="Weissenbach J."/>
            <person name="Wincker P."/>
            <person name="Souciet J.-L."/>
        </authorList>
    </citation>
    <scope>NUCLEOTIDE SEQUENCE [LARGE SCALE GENOMIC DNA]</scope>
    <source>
        <strain>ATCC 8585 / CBS 2359 / DSM 70799 / NBRC 1267 / NRRL Y-1140 / WM37</strain>
    </source>
</reference>
<name>TRMB_KLULA</name>
<keyword id="KW-0489">Methyltransferase</keyword>
<keyword id="KW-0539">Nucleus</keyword>
<keyword id="KW-1185">Reference proteome</keyword>
<keyword id="KW-0694">RNA-binding</keyword>
<keyword id="KW-0949">S-adenosyl-L-methionine</keyword>
<keyword id="KW-0808">Transferase</keyword>
<keyword id="KW-0819">tRNA processing</keyword>
<keyword id="KW-0820">tRNA-binding</keyword>
<accession>Q6CY47</accession>
<dbReference type="EC" id="2.1.1.33" evidence="1"/>
<dbReference type="EMBL" id="CR382121">
    <property type="protein sequence ID" value="CAH02730.1"/>
    <property type="molecule type" value="Genomic_DNA"/>
</dbReference>
<dbReference type="RefSeq" id="XP_451142.1">
    <property type="nucleotide sequence ID" value="XM_451142.1"/>
</dbReference>
<dbReference type="SMR" id="Q6CY47"/>
<dbReference type="FunCoup" id="Q6CY47">
    <property type="interactions" value="570"/>
</dbReference>
<dbReference type="STRING" id="284590.Q6CY47"/>
<dbReference type="PaxDb" id="284590-Q6CY47"/>
<dbReference type="KEGG" id="kla:KLLA0_A03245g"/>
<dbReference type="eggNOG" id="KOG3115">
    <property type="taxonomic scope" value="Eukaryota"/>
</dbReference>
<dbReference type="HOGENOM" id="CLU_050910_3_1_1"/>
<dbReference type="InParanoid" id="Q6CY47"/>
<dbReference type="OMA" id="LPNYFAK"/>
<dbReference type="UniPathway" id="UPA00989"/>
<dbReference type="Proteomes" id="UP000000598">
    <property type="component" value="Chromosome A"/>
</dbReference>
<dbReference type="GO" id="GO:0005634">
    <property type="term" value="C:nucleus"/>
    <property type="evidence" value="ECO:0007669"/>
    <property type="project" value="UniProtKB-SubCell"/>
</dbReference>
<dbReference type="GO" id="GO:0043527">
    <property type="term" value="C:tRNA methyltransferase complex"/>
    <property type="evidence" value="ECO:0007669"/>
    <property type="project" value="TreeGrafter"/>
</dbReference>
<dbReference type="GO" id="GO:0008176">
    <property type="term" value="F:tRNA (guanine(46)-N7)-methyltransferase activity"/>
    <property type="evidence" value="ECO:0007669"/>
    <property type="project" value="UniProtKB-UniRule"/>
</dbReference>
<dbReference type="GO" id="GO:0000049">
    <property type="term" value="F:tRNA binding"/>
    <property type="evidence" value="ECO:0007669"/>
    <property type="project" value="UniProtKB-UniRule"/>
</dbReference>
<dbReference type="CDD" id="cd02440">
    <property type="entry name" value="AdoMet_MTases"/>
    <property type="match status" value="1"/>
</dbReference>
<dbReference type="FunFam" id="3.40.50.150:FF:000060">
    <property type="entry name" value="tRNA (guanine-N(7)-)-methyltransferase"/>
    <property type="match status" value="1"/>
</dbReference>
<dbReference type="Gene3D" id="3.40.50.150">
    <property type="entry name" value="Vaccinia Virus protein VP39"/>
    <property type="match status" value="1"/>
</dbReference>
<dbReference type="HAMAP" id="MF_03055">
    <property type="entry name" value="tRNA_methyltr_TrmB_euk"/>
    <property type="match status" value="1"/>
</dbReference>
<dbReference type="InterPro" id="IPR029063">
    <property type="entry name" value="SAM-dependent_MTases_sf"/>
</dbReference>
<dbReference type="InterPro" id="IPR025763">
    <property type="entry name" value="Trm8_euk"/>
</dbReference>
<dbReference type="InterPro" id="IPR003358">
    <property type="entry name" value="tRNA_(Gua-N-7)_MeTrfase_Trmb"/>
</dbReference>
<dbReference type="NCBIfam" id="TIGR00091">
    <property type="entry name" value="tRNA (guanosine(46)-N7)-methyltransferase TrmB"/>
    <property type="match status" value="1"/>
</dbReference>
<dbReference type="PANTHER" id="PTHR23417">
    <property type="entry name" value="3-DEOXY-D-MANNO-OCTULOSONIC-ACID TRANSFERASE/TRNA GUANINE-N 7 - -METHYLTRANSFERASE"/>
    <property type="match status" value="1"/>
</dbReference>
<dbReference type="PANTHER" id="PTHR23417:SF16">
    <property type="entry name" value="TRNA (GUANINE-N(7)-)-METHYLTRANSFERASE"/>
    <property type="match status" value="1"/>
</dbReference>
<dbReference type="Pfam" id="PF02390">
    <property type="entry name" value="Methyltransf_4"/>
    <property type="match status" value="1"/>
</dbReference>
<dbReference type="SUPFAM" id="SSF53335">
    <property type="entry name" value="S-adenosyl-L-methionine-dependent methyltransferases"/>
    <property type="match status" value="1"/>
</dbReference>
<dbReference type="PROSITE" id="PS51625">
    <property type="entry name" value="SAM_MT_TRMB"/>
    <property type="match status" value="1"/>
</dbReference>
<sequence length="278" mass="32701">MSFSTRRQAYRAEKQDHRKELKHVKIDESVIEKVDKLSLPKKKFYRQRAHSNPFSDHQLEYPISPAHMDWSKLYPHFYDSEKKKMTKDVTIADIGCGYGGLMIDLSPEFPDEMILGMEIRVQVTNYVEDRIIALRTNHAKENGYQNINVLRGNAMKFLPNFFNKGQLSKIFFCFPDPHFKQRKHKARIVTDTLLSEYAYVLKEGGIIYTITDVLDLHEWMVKHLEEHPLFERLSEEWEAQDKCVSIMRNATEEGKKVERNKGDKYIACFVRLPTPDII</sequence>